<feature type="chain" id="PRO_0000127127" description="Achaete-scute homolog 1">
    <location>
        <begin position="1"/>
        <end position="231"/>
    </location>
</feature>
<feature type="domain" description="bHLH" evidence="2">
    <location>
        <begin position="113"/>
        <end position="165"/>
    </location>
</feature>
<feature type="region of interest" description="Disordered" evidence="3">
    <location>
        <begin position="1"/>
        <end position="24"/>
    </location>
</feature>
<feature type="region of interest" description="Disordered" evidence="3">
    <location>
        <begin position="39"/>
        <end position="92"/>
    </location>
</feature>
<feature type="compositionally biased region" description="Low complexity" evidence="3">
    <location>
        <begin position="39"/>
        <end position="51"/>
    </location>
</feature>
<feature type="compositionally biased region" description="Basic residues" evidence="3">
    <location>
        <begin position="76"/>
        <end position="85"/>
    </location>
</feature>
<feature type="modified residue" description="N6-acetyllysine" evidence="18">
    <location>
        <position position="151"/>
    </location>
</feature>
<feature type="sequence conflict" description="In Ref. 1; AAA37780." evidence="16" ref="1">
    <original>V</original>
    <variation>D</variation>
    <location>
        <position position="81"/>
    </location>
</feature>
<feature type="sequence conflict" description="In Ref. 1; AAA37780." evidence="16" ref="1">
    <original>E</original>
    <variation>Q</variation>
    <location>
        <position position="160"/>
    </location>
</feature>
<reference key="1">
    <citation type="journal article" date="1993" name="Biochim. Biophys. Acta">
        <title>Cloning, sequencing and expression of the mouse mammalian achaete-scute homolog 1 (MASH1).</title>
        <authorList>
            <person name="del Amo F."/>
            <person name="Gendron-Maguire M."/>
            <person name="Gridley T."/>
        </authorList>
    </citation>
    <scope>NUCLEOTIDE SEQUENCE [MRNA]</scope>
    <scope>TISSUE SPECIFICITY</scope>
    <scope>DEVELOPMENTAL STAGE</scope>
</reference>
<reference key="2">
    <citation type="journal article" date="1993" name="Mech. Dev.">
        <title>Dynamic expression of the murine Achaete-Scute homologue Mash-1 in the developing nervous system.</title>
        <authorList>
            <person name="Guillemot F."/>
            <person name="Joyner A.L."/>
        </authorList>
    </citation>
    <scope>NUCLEOTIDE SEQUENCE [MRNA]</scope>
    <scope>FUNCTION</scope>
    <scope>TISSUE SPECIFICITY</scope>
    <scope>DEVELOPMENTAL STAGE</scope>
</reference>
<reference key="3">
    <citation type="journal article" date="2005" name="Science">
        <title>The transcriptional landscape of the mammalian genome.</title>
        <authorList>
            <person name="Carninci P."/>
            <person name="Kasukawa T."/>
            <person name="Katayama S."/>
            <person name="Gough J."/>
            <person name="Frith M.C."/>
            <person name="Maeda N."/>
            <person name="Oyama R."/>
            <person name="Ravasi T."/>
            <person name="Lenhard B."/>
            <person name="Wells C."/>
            <person name="Kodzius R."/>
            <person name="Shimokawa K."/>
            <person name="Bajic V.B."/>
            <person name="Brenner S.E."/>
            <person name="Batalov S."/>
            <person name="Forrest A.R."/>
            <person name="Zavolan M."/>
            <person name="Davis M.J."/>
            <person name="Wilming L.G."/>
            <person name="Aidinis V."/>
            <person name="Allen J.E."/>
            <person name="Ambesi-Impiombato A."/>
            <person name="Apweiler R."/>
            <person name="Aturaliya R.N."/>
            <person name="Bailey T.L."/>
            <person name="Bansal M."/>
            <person name="Baxter L."/>
            <person name="Beisel K.W."/>
            <person name="Bersano T."/>
            <person name="Bono H."/>
            <person name="Chalk A.M."/>
            <person name="Chiu K.P."/>
            <person name="Choudhary V."/>
            <person name="Christoffels A."/>
            <person name="Clutterbuck D.R."/>
            <person name="Crowe M.L."/>
            <person name="Dalla E."/>
            <person name="Dalrymple B.P."/>
            <person name="de Bono B."/>
            <person name="Della Gatta G."/>
            <person name="di Bernardo D."/>
            <person name="Down T."/>
            <person name="Engstrom P."/>
            <person name="Fagiolini M."/>
            <person name="Faulkner G."/>
            <person name="Fletcher C.F."/>
            <person name="Fukushima T."/>
            <person name="Furuno M."/>
            <person name="Futaki S."/>
            <person name="Gariboldi M."/>
            <person name="Georgii-Hemming P."/>
            <person name="Gingeras T.R."/>
            <person name="Gojobori T."/>
            <person name="Green R.E."/>
            <person name="Gustincich S."/>
            <person name="Harbers M."/>
            <person name="Hayashi Y."/>
            <person name="Hensch T.K."/>
            <person name="Hirokawa N."/>
            <person name="Hill D."/>
            <person name="Huminiecki L."/>
            <person name="Iacono M."/>
            <person name="Ikeo K."/>
            <person name="Iwama A."/>
            <person name="Ishikawa T."/>
            <person name="Jakt M."/>
            <person name="Kanapin A."/>
            <person name="Katoh M."/>
            <person name="Kawasawa Y."/>
            <person name="Kelso J."/>
            <person name="Kitamura H."/>
            <person name="Kitano H."/>
            <person name="Kollias G."/>
            <person name="Krishnan S.P."/>
            <person name="Kruger A."/>
            <person name="Kummerfeld S.K."/>
            <person name="Kurochkin I.V."/>
            <person name="Lareau L.F."/>
            <person name="Lazarevic D."/>
            <person name="Lipovich L."/>
            <person name="Liu J."/>
            <person name="Liuni S."/>
            <person name="McWilliam S."/>
            <person name="Madan Babu M."/>
            <person name="Madera M."/>
            <person name="Marchionni L."/>
            <person name="Matsuda H."/>
            <person name="Matsuzawa S."/>
            <person name="Miki H."/>
            <person name="Mignone F."/>
            <person name="Miyake S."/>
            <person name="Morris K."/>
            <person name="Mottagui-Tabar S."/>
            <person name="Mulder N."/>
            <person name="Nakano N."/>
            <person name="Nakauchi H."/>
            <person name="Ng P."/>
            <person name="Nilsson R."/>
            <person name="Nishiguchi S."/>
            <person name="Nishikawa S."/>
            <person name="Nori F."/>
            <person name="Ohara O."/>
            <person name="Okazaki Y."/>
            <person name="Orlando V."/>
            <person name="Pang K.C."/>
            <person name="Pavan W.J."/>
            <person name="Pavesi G."/>
            <person name="Pesole G."/>
            <person name="Petrovsky N."/>
            <person name="Piazza S."/>
            <person name="Reed J."/>
            <person name="Reid J.F."/>
            <person name="Ring B.Z."/>
            <person name="Ringwald M."/>
            <person name="Rost B."/>
            <person name="Ruan Y."/>
            <person name="Salzberg S.L."/>
            <person name="Sandelin A."/>
            <person name="Schneider C."/>
            <person name="Schoenbach C."/>
            <person name="Sekiguchi K."/>
            <person name="Semple C.A."/>
            <person name="Seno S."/>
            <person name="Sessa L."/>
            <person name="Sheng Y."/>
            <person name="Shibata Y."/>
            <person name="Shimada H."/>
            <person name="Shimada K."/>
            <person name="Silva D."/>
            <person name="Sinclair B."/>
            <person name="Sperling S."/>
            <person name="Stupka E."/>
            <person name="Sugiura K."/>
            <person name="Sultana R."/>
            <person name="Takenaka Y."/>
            <person name="Taki K."/>
            <person name="Tammoja K."/>
            <person name="Tan S.L."/>
            <person name="Tang S."/>
            <person name="Taylor M.S."/>
            <person name="Tegner J."/>
            <person name="Teichmann S.A."/>
            <person name="Ueda H.R."/>
            <person name="van Nimwegen E."/>
            <person name="Verardo R."/>
            <person name="Wei C.L."/>
            <person name="Yagi K."/>
            <person name="Yamanishi H."/>
            <person name="Zabarovsky E."/>
            <person name="Zhu S."/>
            <person name="Zimmer A."/>
            <person name="Hide W."/>
            <person name="Bult C."/>
            <person name="Grimmond S.M."/>
            <person name="Teasdale R.D."/>
            <person name="Liu E.T."/>
            <person name="Brusic V."/>
            <person name="Quackenbush J."/>
            <person name="Wahlestedt C."/>
            <person name="Mattick J.S."/>
            <person name="Hume D.A."/>
            <person name="Kai C."/>
            <person name="Sasaki D."/>
            <person name="Tomaru Y."/>
            <person name="Fukuda S."/>
            <person name="Kanamori-Katayama M."/>
            <person name="Suzuki M."/>
            <person name="Aoki J."/>
            <person name="Arakawa T."/>
            <person name="Iida J."/>
            <person name="Imamura K."/>
            <person name="Itoh M."/>
            <person name="Kato T."/>
            <person name="Kawaji H."/>
            <person name="Kawagashira N."/>
            <person name="Kawashima T."/>
            <person name="Kojima M."/>
            <person name="Kondo S."/>
            <person name="Konno H."/>
            <person name="Nakano K."/>
            <person name="Ninomiya N."/>
            <person name="Nishio T."/>
            <person name="Okada M."/>
            <person name="Plessy C."/>
            <person name="Shibata K."/>
            <person name="Shiraki T."/>
            <person name="Suzuki S."/>
            <person name="Tagami M."/>
            <person name="Waki K."/>
            <person name="Watahiki A."/>
            <person name="Okamura-Oho Y."/>
            <person name="Suzuki H."/>
            <person name="Kawai J."/>
            <person name="Hayashizaki Y."/>
        </authorList>
    </citation>
    <scope>NUCLEOTIDE SEQUENCE [LARGE SCALE MRNA]</scope>
    <source>
        <strain>C57BL/6J</strain>
        <tissue>Eye</tissue>
    </source>
</reference>
<reference key="4">
    <citation type="journal article" date="2009" name="PLoS Biol.">
        <title>Lineage-specific biology revealed by a finished genome assembly of the mouse.</title>
        <authorList>
            <person name="Church D.M."/>
            <person name="Goodstadt L."/>
            <person name="Hillier L.W."/>
            <person name="Zody M.C."/>
            <person name="Goldstein S."/>
            <person name="She X."/>
            <person name="Bult C.J."/>
            <person name="Agarwala R."/>
            <person name="Cherry J.L."/>
            <person name="DiCuccio M."/>
            <person name="Hlavina W."/>
            <person name="Kapustin Y."/>
            <person name="Meric P."/>
            <person name="Maglott D."/>
            <person name="Birtle Z."/>
            <person name="Marques A.C."/>
            <person name="Graves T."/>
            <person name="Zhou S."/>
            <person name="Teague B."/>
            <person name="Potamousis K."/>
            <person name="Churas C."/>
            <person name="Place M."/>
            <person name="Herschleb J."/>
            <person name="Runnheim R."/>
            <person name="Forrest D."/>
            <person name="Amos-Landgraf J."/>
            <person name="Schwartz D.C."/>
            <person name="Cheng Z."/>
            <person name="Lindblad-Toh K."/>
            <person name="Eichler E.E."/>
            <person name="Ponting C.P."/>
        </authorList>
    </citation>
    <scope>NUCLEOTIDE SEQUENCE [LARGE SCALE GENOMIC DNA]</scope>
    <source>
        <strain>C57BL/6J</strain>
    </source>
</reference>
<reference key="5">
    <citation type="submission" date="2005-07" db="EMBL/GenBank/DDBJ databases">
        <authorList>
            <person name="Mural R.J."/>
            <person name="Adams M.D."/>
            <person name="Myers E.W."/>
            <person name="Smith H.O."/>
            <person name="Venter J.C."/>
        </authorList>
    </citation>
    <scope>NUCLEOTIDE SEQUENCE [LARGE SCALE GENOMIC DNA]</scope>
</reference>
<reference key="6">
    <citation type="journal article" date="2004" name="Genome Res.">
        <title>The status, quality, and expansion of the NIH full-length cDNA project: the Mammalian Gene Collection (MGC).</title>
        <authorList>
            <consortium name="The MGC Project Team"/>
        </authorList>
    </citation>
    <scope>NUCLEOTIDE SEQUENCE [LARGE SCALE MRNA]</scope>
    <source>
        <strain>C57BL/6J</strain>
        <tissue>Brain</tissue>
    </source>
</reference>
<reference key="7">
    <citation type="journal article" date="1992" name="Development">
        <title>Induction and repression of mammalian achaete-scute homologue (MASH) gene expression during neuronal differentiation of P19 embryonal carcinoma cells.</title>
        <authorList>
            <person name="Johnson J.E."/>
            <person name="Zimmerman K."/>
            <person name="Saito T."/>
            <person name="Anderson D.J."/>
        </authorList>
    </citation>
    <scope>SUBCELLULAR LOCATION</scope>
</reference>
<reference key="8">
    <citation type="journal article" date="1993" name="Cell">
        <title>Mammalian achaete-scute homolog 1 is required for the early development of olfactory and autonomic neurons.</title>
        <authorList>
            <person name="Guillemot F."/>
            <person name="Lo L.C."/>
            <person name="Johnson J.E."/>
            <person name="Auerbach A."/>
            <person name="Anderson D.J."/>
            <person name="Joyner A.L."/>
        </authorList>
    </citation>
    <scope>FUNCTION</scope>
    <scope>DISRUPTION PHENOTYPE</scope>
</reference>
<reference key="9">
    <citation type="journal article" date="2005" name="Proc. Natl. Acad. Sci. U.S.A.">
        <title>Foxn4 acts synergistically with Mash1 to specify subtype identity of V2 interneurons in the spinal cord.</title>
        <authorList>
            <person name="Li S."/>
            <person name="Misra K."/>
            <person name="Matise M.P."/>
            <person name="Xiang M."/>
        </authorList>
    </citation>
    <scope>FUNCTION IN NEUROGENESIS</scope>
    <scope>DEVELOPMENTAL STAGE</scope>
    <scope>TISSUE SPECIFICITY</scope>
</reference>
<reference key="10">
    <citation type="journal article" date="2007" name="Development">
        <title>A regulatory network involving Foxn4, Mash1 and delta-like 4/Notch1 generates V2a and V2b spinal interneurons from a common progenitor pool.</title>
        <authorList>
            <person name="Del Barrio M.G."/>
            <person name="Taveira-Marques R."/>
            <person name="Muroyama Y."/>
            <person name="Yuk D.I."/>
            <person name="Li S."/>
            <person name="Wines-Samuelson M."/>
            <person name="Shen J."/>
            <person name="Smith H.K."/>
            <person name="Xiang M."/>
            <person name="Rowitch D."/>
            <person name="Richardson W.D."/>
        </authorList>
    </citation>
    <scope>FUNCTION IN NEUROGENESIS</scope>
</reference>
<reference key="11">
    <citation type="journal article" date="2008" name="Genes Cells">
        <title>Mash1 is required for neuroendocrine cell development in the glandular stomach.</title>
        <authorList>
            <person name="Kokubu H."/>
            <person name="Ohtsuka T."/>
            <person name="Kageyama R."/>
        </authorList>
    </citation>
    <scope>FUNCTION</scope>
    <scope>TISSUE SPECIFICITY</scope>
    <scope>DEVELOPMENTAL STAGE</scope>
    <scope>DISRUPTION PHENOTYPE</scope>
</reference>
<reference key="12">
    <citation type="journal article" date="2010" name="Nature">
        <title>Direct conversion of fibroblasts to functional neurons by defined factors.</title>
        <authorList>
            <person name="Vierbuchen T."/>
            <person name="Ostermeier A."/>
            <person name="Pang Z.P."/>
            <person name="Kokubu Y."/>
            <person name="Suedhof T.C."/>
            <person name="Wernig M."/>
        </authorList>
    </citation>
    <scope>FUNCTION</scope>
</reference>
<reference key="13">
    <citation type="journal article" date="2013" name="Cell">
        <title>Hierarchical mechanisms for direct reprogramming of fibroblasts to neurons.</title>
        <authorList>
            <person name="Wapinski O.L."/>
            <person name="Vierbuchen T."/>
            <person name="Qu K."/>
            <person name="Lee Q.Y."/>
            <person name="Chanda S."/>
            <person name="Fuentes D.R."/>
            <person name="Giresi P.G."/>
            <person name="Ng Y.H."/>
            <person name="Marro S."/>
            <person name="Neff N.F."/>
            <person name="Drechsel D."/>
            <person name="Martynoga B."/>
            <person name="Castro D.S."/>
            <person name="Webb A.E."/>
            <person name="Suedhof T.C."/>
            <person name="Brunet A."/>
            <person name="Guillemot F."/>
            <person name="Chang H.Y."/>
            <person name="Wernig M."/>
        </authorList>
    </citation>
    <scope>FUNCTION</scope>
    <scope>DNA-BINDING</scope>
</reference>
<reference key="14">
    <citation type="journal article" date="2013" name="Proc. Natl. Acad. Sci. U.S.A.">
        <title>Label-free quantitative proteomics of the lysine acetylome in mitochondria identifies substrates of SIRT3 in metabolic pathways.</title>
        <authorList>
            <person name="Rardin M.J."/>
            <person name="Newman J.C."/>
            <person name="Held J.M."/>
            <person name="Cusack M.P."/>
            <person name="Sorensen D.J."/>
            <person name="Li B."/>
            <person name="Schilling B."/>
            <person name="Mooney S.D."/>
            <person name="Kahn C.R."/>
            <person name="Verdin E."/>
            <person name="Gibson B.W."/>
        </authorList>
    </citation>
    <scope>ACETYLATION [LARGE SCALE ANALYSIS] AT LYS-151</scope>
    <scope>IDENTIFICATION BY MASS SPECTROMETRY [LARGE SCALE ANALYSIS]</scope>
    <source>
        <tissue>Liver</tissue>
    </source>
</reference>
<reference key="15">
    <citation type="journal article" date="2016" name="Nature">
        <title>Dissecting direct reprogramming from fibroblast to neuron using single-cell RNA-seq.</title>
        <authorList>
            <person name="Treutlein B."/>
            <person name="Lee Q.Y."/>
            <person name="Camp J.G."/>
            <person name="Mall M."/>
            <person name="Koh W."/>
            <person name="Shariati S.A."/>
            <person name="Sim S."/>
            <person name="Neff N.F."/>
            <person name="Skotheim J.M."/>
            <person name="Wernig M."/>
            <person name="Quake S.R."/>
        </authorList>
    </citation>
    <scope>FUNCTION</scope>
</reference>
<name>ASCL1_MOUSE</name>
<gene>
    <name evidence="17" type="primary">Ascl1</name>
    <name evidence="14 15" type="synonym">Ash1</name>
    <name evidence="14 15" type="synonym">Mash-1</name>
    <name evidence="14 15" type="synonym">Mash1</name>
</gene>
<proteinExistence type="evidence at protein level"/>
<evidence type="ECO:0000250" key="1">
    <source>
        <dbReference type="UniProtKB" id="P50553"/>
    </source>
</evidence>
<evidence type="ECO:0000255" key="2">
    <source>
        <dbReference type="PROSITE-ProRule" id="PRU00981"/>
    </source>
</evidence>
<evidence type="ECO:0000256" key="3">
    <source>
        <dbReference type="SAM" id="MobiDB-lite"/>
    </source>
</evidence>
<evidence type="ECO:0000269" key="4">
    <source>
    </source>
</evidence>
<evidence type="ECO:0000269" key="5">
    <source>
    </source>
</evidence>
<evidence type="ECO:0000269" key="6">
    <source>
    </source>
</evidence>
<evidence type="ECO:0000269" key="7">
    <source>
    </source>
</evidence>
<evidence type="ECO:0000269" key="8">
    <source>
    </source>
</evidence>
<evidence type="ECO:0000269" key="9">
    <source>
    </source>
</evidence>
<evidence type="ECO:0000269" key="10">
    <source>
    </source>
</evidence>
<evidence type="ECO:0000269" key="11">
    <source>
    </source>
</evidence>
<evidence type="ECO:0000269" key="12">
    <source>
    </source>
</evidence>
<evidence type="ECO:0000269" key="13">
    <source>
    </source>
</evidence>
<evidence type="ECO:0000303" key="14">
    <source>
    </source>
</evidence>
<evidence type="ECO:0000303" key="15">
    <source>
    </source>
</evidence>
<evidence type="ECO:0000305" key="16"/>
<evidence type="ECO:0000312" key="17">
    <source>
        <dbReference type="MGI" id="MGI:96919"/>
    </source>
</evidence>
<evidence type="ECO:0007744" key="18">
    <source>
    </source>
</evidence>
<comment type="function">
    <text evidence="5 6 7 8 9 10 11 12">Transcription factor that plays a key role in neuronal differentiation: acts as a pioneer transcription factor, accessing closed chromatin to allow other factors to bind and activate neural pathways (PubMed:24243019). Directly binds the E box motif (5'-CANNTG-3') on promoters and promotes transcription of neuronal genes (PubMed:20107439, PubMed:24243019, PubMed:27281220). The combination of three transcription factors, ASCL1, POU3F2/BRN2 and MYT1L, is sufficient to reprogram fibroblasts and other somatic cells into induced neuronal (iN) cells in vitro (PubMed:20107439, PubMed:24243019, PubMed:27281220). Plays a role at early stages of development of specific neural lineages in most regions of the CNS, and of several lineages in the PNS (PubMed:8217843). Essential for the generation of olfactory and autonomic neurons (PubMed:8221886). Acts synergistically with FOXN4 to specify the identity of V2b neurons rather than V2a from bipotential p2 progenitors during spinal cord neurogenesis, probably through DLL4-NOTCH signaling activation (PubMed:16020526, PubMed:17728344). Involved in the regulation of neuroendocrine cell development in the glandular stomach (PubMed:18173746).</text>
</comment>
<comment type="subunit">
    <text evidence="1">Efficient DNA binding requires dimerization with another bHLH protein. Forms a heterodimer with TCF3.</text>
</comment>
<comment type="subcellular location">
    <subcellularLocation>
        <location evidence="4">Nucleus</location>
    </subcellularLocation>
</comment>
<comment type="tissue specificity">
    <text evidence="5 7 11 13">Developing CNS and PNS at embryonic and postnatal stages. Expressed in the epithelium of glandular stomach (PubMed:18173746).</text>
</comment>
<comment type="developmental stage">
    <text evidence="5 7 11 13">Between 8.5 dpc and 10.5 dpc it is found in the neuroepithelium of the midbrain and ventral forebrain, as well as in the spinal cord. Between 10.5 dpc and 12.5 dpc its expression pattern changes from a restricted to a widespread zone, it is then found at variable levels in the ventricular zone in all regions of the brain, where is expressed in a subset of p2 progenitors that can give rise to either V2a or V2b interneuron subtypes. From 12.5 dpc to postnatal stages it is also expressed in cells outside of the ventricular zone through the brain, and in addition it is also expressed during development of the olfactory epithelium and neural retina. At 12.5 dpc, it is highly expressed by differentiating enteric neurons in the mesenchyme of the stomach. At 14.5 and 16.5 dpc, it is also expressed in the epithelium of the glandular stomach (PubMed:18173746).</text>
</comment>
<comment type="disruption phenotype">
    <text evidence="7 12">Lethality at birth caused by severe defects in neurogenesis. While the brain and spinal cord of the mutants appear normal, their olfactory epithelium and sympathetic, parasympathetic and enteric ganglia are severely affected. In the olfactory epithelium, neuronal progenitors die at an early stage, whereas the non-neuronal supporting cells are present. In sympathetic ganglia, the development of neuronal precursors is arrested, preventing the generation of sympathetic neurons, without affecting glial precursor cells. Homozygous MASH1-null mice have smaller stomachs than the control, and neuroendocrine cells are mostly missing, while chief, parietal and pit cells are formed. However, the wall of the glandular stomach is much thicker, has a deeper fold structure, and the forestomach epithelium is villous compared to controls (PubMed:18173746).</text>
</comment>
<organism>
    <name type="scientific">Mus musculus</name>
    <name type="common">Mouse</name>
    <dbReference type="NCBI Taxonomy" id="10090"/>
    <lineage>
        <taxon>Eukaryota</taxon>
        <taxon>Metazoa</taxon>
        <taxon>Chordata</taxon>
        <taxon>Craniata</taxon>
        <taxon>Vertebrata</taxon>
        <taxon>Euteleostomi</taxon>
        <taxon>Mammalia</taxon>
        <taxon>Eutheria</taxon>
        <taxon>Euarchontoglires</taxon>
        <taxon>Glires</taxon>
        <taxon>Rodentia</taxon>
        <taxon>Myomorpha</taxon>
        <taxon>Muroidea</taxon>
        <taxon>Muridae</taxon>
        <taxon>Murinae</taxon>
        <taxon>Mus</taxon>
        <taxon>Mus</taxon>
    </lineage>
</organism>
<keyword id="KW-0007">Acetylation</keyword>
<keyword id="KW-0010">Activator</keyword>
<keyword id="KW-0217">Developmental protein</keyword>
<keyword id="KW-0221">Differentiation</keyword>
<keyword id="KW-0238">DNA-binding</keyword>
<keyword id="KW-0524">Neurogenesis</keyword>
<keyword id="KW-0539">Nucleus</keyword>
<keyword id="KW-1185">Reference proteome</keyword>
<keyword id="KW-0804">Transcription</keyword>
<keyword id="KW-0805">Transcription regulation</keyword>
<accession>Q02067</accession>
<accession>Q7TNT5</accession>
<sequence length="231" mass="24741">MESSGKMESGAGQQPQPPQPFLPPAACFFATAAAAAAAAAAAAQSAQQQQPQAPPQQAPQLSPVADSQPSGGGHKSAAKQVKRQRSSSPELMRCKRRLNFSGFGYSLPQQQPAAVARRNERERNRVKLVNLGFATLREHVPNGAANKKMSKVETLRSAVEYIRALQQLLDEHDAVSAAFQAGVLSPTISPNYSNDLNSMAGSPVSSYSSDEGSYDPLSPEEQELLDFTNWF</sequence>
<protein>
    <recommendedName>
        <fullName evidence="14 15">Achaete-scute homolog 1</fullName>
        <shortName evidence="14 15">ASH-1</shortName>
        <shortName evidence="14 15">mASH-1</shortName>
        <shortName evidence="14 15">mASH1</shortName>
    </recommendedName>
</protein>
<dbReference type="EMBL" id="M95603">
    <property type="protein sequence ID" value="AAA37780.1"/>
    <property type="molecule type" value="mRNA"/>
</dbReference>
<dbReference type="EMBL" id="AK143210">
    <property type="protein sequence ID" value="BAE25307.1"/>
    <property type="molecule type" value="mRNA"/>
</dbReference>
<dbReference type="EMBL" id="AC122360">
    <property type="status" value="NOT_ANNOTATED_CDS"/>
    <property type="molecule type" value="Genomic_DNA"/>
</dbReference>
<dbReference type="EMBL" id="CH466539">
    <property type="protein sequence ID" value="EDL21455.1"/>
    <property type="molecule type" value="Genomic_DNA"/>
</dbReference>
<dbReference type="EMBL" id="BC055748">
    <property type="protein sequence ID" value="AAH55748.1"/>
    <property type="molecule type" value="mRNA"/>
</dbReference>
<dbReference type="CCDS" id="CCDS24101.1"/>
<dbReference type="PIR" id="S28186">
    <property type="entry name" value="S28186"/>
</dbReference>
<dbReference type="RefSeq" id="NP_032579.2">
    <property type="nucleotide sequence ID" value="NM_008553.4"/>
</dbReference>
<dbReference type="SMR" id="Q02067"/>
<dbReference type="BioGRID" id="201314">
    <property type="interactions" value="9"/>
</dbReference>
<dbReference type="FunCoup" id="Q02067">
    <property type="interactions" value="451"/>
</dbReference>
<dbReference type="STRING" id="10090.ENSMUSP00000020243"/>
<dbReference type="iPTMnet" id="Q02067"/>
<dbReference type="PhosphoSitePlus" id="Q02067"/>
<dbReference type="PaxDb" id="10090-ENSMUSP00000020243"/>
<dbReference type="ProteomicsDB" id="281917"/>
<dbReference type="Antibodypedia" id="18050">
    <property type="antibodies" value="542 antibodies from 42 providers"/>
</dbReference>
<dbReference type="DNASU" id="17172"/>
<dbReference type="Ensembl" id="ENSMUST00000020243.10">
    <property type="protein sequence ID" value="ENSMUSP00000020243.8"/>
    <property type="gene ID" value="ENSMUSG00000020052.10"/>
</dbReference>
<dbReference type="GeneID" id="17172"/>
<dbReference type="KEGG" id="mmu:17172"/>
<dbReference type="UCSC" id="uc007gqs.1">
    <property type="organism name" value="mouse"/>
</dbReference>
<dbReference type="AGR" id="MGI:96919"/>
<dbReference type="CTD" id="429"/>
<dbReference type="MGI" id="MGI:96919">
    <property type="gene designation" value="Ascl1"/>
</dbReference>
<dbReference type="VEuPathDB" id="HostDB:ENSMUSG00000020052"/>
<dbReference type="eggNOG" id="KOG4029">
    <property type="taxonomic scope" value="Eukaryota"/>
</dbReference>
<dbReference type="GeneTree" id="ENSGT00940000162483"/>
<dbReference type="HOGENOM" id="CLU_063523_3_0_1"/>
<dbReference type="InParanoid" id="Q02067"/>
<dbReference type="OMA" id="QPAACFF"/>
<dbReference type="OrthoDB" id="5976910at2759"/>
<dbReference type="PhylomeDB" id="Q02067"/>
<dbReference type="TreeFam" id="TF322889"/>
<dbReference type="BioGRID-ORCS" id="17172">
    <property type="hits" value="3 hits in 78 CRISPR screens"/>
</dbReference>
<dbReference type="ChiTaRS" id="Ascl1">
    <property type="organism name" value="mouse"/>
</dbReference>
<dbReference type="PRO" id="PR:Q02067"/>
<dbReference type="Proteomes" id="UP000000589">
    <property type="component" value="Chromosome 10"/>
</dbReference>
<dbReference type="RNAct" id="Q02067">
    <property type="molecule type" value="protein"/>
</dbReference>
<dbReference type="Bgee" id="ENSMUSG00000020052">
    <property type="expression patterns" value="Expressed in medial ganglionic eminence and 125 other cell types or tissues"/>
</dbReference>
<dbReference type="GO" id="GO:0043025">
    <property type="term" value="C:neuronal cell body"/>
    <property type="evidence" value="ECO:0000314"/>
    <property type="project" value="MGI"/>
</dbReference>
<dbReference type="GO" id="GO:0005634">
    <property type="term" value="C:nucleus"/>
    <property type="evidence" value="ECO:0000314"/>
    <property type="project" value="MGI"/>
</dbReference>
<dbReference type="GO" id="GO:0043425">
    <property type="term" value="F:bHLH transcription factor binding"/>
    <property type="evidence" value="ECO:0007669"/>
    <property type="project" value="Ensembl"/>
</dbReference>
<dbReference type="GO" id="GO:0003682">
    <property type="term" value="F:chromatin binding"/>
    <property type="evidence" value="ECO:0000314"/>
    <property type="project" value="MGI"/>
</dbReference>
<dbReference type="GO" id="GO:0003700">
    <property type="term" value="F:DNA-binding transcription factor activity"/>
    <property type="evidence" value="ECO:0000314"/>
    <property type="project" value="UniProtKB"/>
</dbReference>
<dbReference type="GO" id="GO:0001227">
    <property type="term" value="F:DNA-binding transcription repressor activity, RNA polymerase II-specific"/>
    <property type="evidence" value="ECO:0007669"/>
    <property type="project" value="Ensembl"/>
</dbReference>
<dbReference type="GO" id="GO:0070888">
    <property type="term" value="F:E-box binding"/>
    <property type="evidence" value="ECO:0007669"/>
    <property type="project" value="Ensembl"/>
</dbReference>
<dbReference type="GO" id="GO:0042802">
    <property type="term" value="F:identical protein binding"/>
    <property type="evidence" value="ECO:0007669"/>
    <property type="project" value="Ensembl"/>
</dbReference>
<dbReference type="GO" id="GO:0046983">
    <property type="term" value="F:protein dimerization activity"/>
    <property type="evidence" value="ECO:0007669"/>
    <property type="project" value="InterPro"/>
</dbReference>
<dbReference type="GO" id="GO:0043565">
    <property type="term" value="F:sequence-specific DNA binding"/>
    <property type="evidence" value="ECO:0000314"/>
    <property type="project" value="MGI"/>
</dbReference>
<dbReference type="GO" id="GO:0061104">
    <property type="term" value="P:adrenal chromaffin cell differentiation"/>
    <property type="evidence" value="ECO:0000315"/>
    <property type="project" value="MGI"/>
</dbReference>
<dbReference type="GO" id="GO:0061103">
    <property type="term" value="P:carotid body glomus cell differentiation"/>
    <property type="evidence" value="ECO:0000315"/>
    <property type="project" value="MGI"/>
</dbReference>
<dbReference type="GO" id="GO:0048469">
    <property type="term" value="P:cell maturation"/>
    <property type="evidence" value="ECO:0000315"/>
    <property type="project" value="MGI"/>
</dbReference>
<dbReference type="GO" id="GO:0071259">
    <property type="term" value="P:cellular response to magnetism"/>
    <property type="evidence" value="ECO:0007669"/>
    <property type="project" value="Ensembl"/>
</dbReference>
<dbReference type="GO" id="GO:0021954">
    <property type="term" value="P:central nervous system neuron development"/>
    <property type="evidence" value="ECO:0000315"/>
    <property type="project" value="MGI"/>
</dbReference>
<dbReference type="GO" id="GO:0021987">
    <property type="term" value="P:cerebral cortex development"/>
    <property type="evidence" value="ECO:0000315"/>
    <property type="project" value="MGI"/>
</dbReference>
<dbReference type="GO" id="GO:0021892">
    <property type="term" value="P:cerebral cortex GABAergic interneuron differentiation"/>
    <property type="evidence" value="ECO:0007669"/>
    <property type="project" value="Ensembl"/>
</dbReference>
<dbReference type="GO" id="GO:0021902">
    <property type="term" value="P:commitment of neuronal cell to specific neuron type in forebrain"/>
    <property type="evidence" value="ECO:0000315"/>
    <property type="project" value="MGI"/>
</dbReference>
<dbReference type="GO" id="GO:0048484">
    <property type="term" value="P:enteric nervous system development"/>
    <property type="evidence" value="ECO:0000304"/>
    <property type="project" value="BHF-UCL"/>
</dbReference>
<dbReference type="GO" id="GO:0097154">
    <property type="term" value="P:GABAergic neuron differentiation"/>
    <property type="evidence" value="ECO:0000316"/>
    <property type="project" value="MGI"/>
</dbReference>
<dbReference type="GO" id="GO:0048699">
    <property type="term" value="P:generation of neurons"/>
    <property type="evidence" value="ECO:0000315"/>
    <property type="project" value="MGI"/>
</dbReference>
<dbReference type="GO" id="GO:0007507">
    <property type="term" value="P:heart development"/>
    <property type="evidence" value="ECO:0007669"/>
    <property type="project" value="Ensembl"/>
</dbReference>
<dbReference type="GO" id="GO:0061100">
    <property type="term" value="P:lung neuroendocrine cell differentiation"/>
    <property type="evidence" value="ECO:0000315"/>
    <property type="project" value="MGI"/>
</dbReference>
<dbReference type="GO" id="GO:0097475">
    <property type="term" value="P:motor neuron migration"/>
    <property type="evidence" value="ECO:0000315"/>
    <property type="project" value="MGI"/>
</dbReference>
<dbReference type="GO" id="GO:0050883">
    <property type="term" value="P:musculoskeletal movement, spinal reflex action"/>
    <property type="evidence" value="ECO:0000315"/>
    <property type="project" value="MGI"/>
</dbReference>
<dbReference type="GO" id="GO:0043066">
    <property type="term" value="P:negative regulation of apoptotic process"/>
    <property type="evidence" value="ECO:0007669"/>
    <property type="project" value="Ensembl"/>
</dbReference>
<dbReference type="GO" id="GO:0045665">
    <property type="term" value="P:negative regulation of neuron differentiation"/>
    <property type="evidence" value="ECO:0007669"/>
    <property type="project" value="Ensembl"/>
</dbReference>
<dbReference type="GO" id="GO:0007399">
    <property type="term" value="P:nervous system development"/>
    <property type="evidence" value="ECO:0000314"/>
    <property type="project" value="UniProtKB"/>
</dbReference>
<dbReference type="GO" id="GO:0061351">
    <property type="term" value="P:neural precursor cell proliferation"/>
    <property type="evidence" value="ECO:0000315"/>
    <property type="project" value="MGI"/>
</dbReference>
<dbReference type="GO" id="GO:0007400">
    <property type="term" value="P:neuroblast fate determination"/>
    <property type="evidence" value="ECO:0000315"/>
    <property type="project" value="MGI"/>
</dbReference>
<dbReference type="GO" id="GO:0007405">
    <property type="term" value="P:neuroblast proliferation"/>
    <property type="evidence" value="ECO:0000316"/>
    <property type="project" value="MGI"/>
</dbReference>
<dbReference type="GO" id="GO:0061101">
    <property type="term" value="P:neuroendocrine cell differentiation"/>
    <property type="evidence" value="ECO:0000315"/>
    <property type="project" value="MGI"/>
</dbReference>
<dbReference type="GO" id="GO:0048666">
    <property type="term" value="P:neuron development"/>
    <property type="evidence" value="ECO:0000314"/>
    <property type="project" value="UniProtKB"/>
</dbReference>
<dbReference type="GO" id="GO:0030182">
    <property type="term" value="P:neuron differentiation"/>
    <property type="evidence" value="ECO:0000314"/>
    <property type="project" value="UniProtKB"/>
</dbReference>
<dbReference type="GO" id="GO:0048663">
    <property type="term" value="P:neuron fate commitment"/>
    <property type="evidence" value="ECO:0000314"/>
    <property type="project" value="UniProtKB"/>
</dbReference>
<dbReference type="GO" id="GO:0048665">
    <property type="term" value="P:neuron fate specification"/>
    <property type="evidence" value="ECO:0000314"/>
    <property type="project" value="UniProtKB"/>
</dbReference>
<dbReference type="GO" id="GO:0003358">
    <property type="term" value="P:noradrenergic neuron development"/>
    <property type="evidence" value="ECO:0000315"/>
    <property type="project" value="UniProtKB"/>
</dbReference>
<dbReference type="GO" id="GO:0003359">
    <property type="term" value="P:noradrenergic neuron fate commitment"/>
    <property type="evidence" value="ECO:0007669"/>
    <property type="project" value="Ensembl"/>
</dbReference>
<dbReference type="GO" id="GO:0007219">
    <property type="term" value="P:Notch signaling pathway"/>
    <property type="evidence" value="ECO:0000315"/>
    <property type="project" value="MGI"/>
</dbReference>
<dbReference type="GO" id="GO:0060166">
    <property type="term" value="P:olfactory pit development"/>
    <property type="evidence" value="ECO:0000315"/>
    <property type="project" value="MGI"/>
</dbReference>
<dbReference type="GO" id="GO:0021779">
    <property type="term" value="P:oligodendrocyte cell fate commitment"/>
    <property type="evidence" value="ECO:0000315"/>
    <property type="project" value="MGI"/>
</dbReference>
<dbReference type="GO" id="GO:0014003">
    <property type="term" value="P:oligodendrocyte development"/>
    <property type="evidence" value="ECO:0000315"/>
    <property type="project" value="MGI"/>
</dbReference>
<dbReference type="GO" id="GO:0048709">
    <property type="term" value="P:oligodendrocyte differentiation"/>
    <property type="evidence" value="ECO:0000315"/>
    <property type="project" value="MGI"/>
</dbReference>
<dbReference type="GO" id="GO:0048486">
    <property type="term" value="P:parasympathetic nervous system development"/>
    <property type="evidence" value="ECO:0000304"/>
    <property type="project" value="BHF-UCL"/>
</dbReference>
<dbReference type="GO" id="GO:0007389">
    <property type="term" value="P:pattern specification process"/>
    <property type="evidence" value="ECO:0000315"/>
    <property type="project" value="MGI"/>
</dbReference>
<dbReference type="GO" id="GO:0048935">
    <property type="term" value="P:peripheral nervous system neuron development"/>
    <property type="evidence" value="ECO:0000315"/>
    <property type="project" value="MGI"/>
</dbReference>
<dbReference type="GO" id="GO:0045787">
    <property type="term" value="P:positive regulation of cell cycle"/>
    <property type="evidence" value="ECO:0000314"/>
    <property type="project" value="MGI"/>
</dbReference>
<dbReference type="GO" id="GO:2000179">
    <property type="term" value="P:positive regulation of neural precursor cell proliferation"/>
    <property type="evidence" value="ECO:0000315"/>
    <property type="project" value="MGI"/>
</dbReference>
<dbReference type="GO" id="GO:0050769">
    <property type="term" value="P:positive regulation of neurogenesis"/>
    <property type="evidence" value="ECO:0000315"/>
    <property type="project" value="MGI"/>
</dbReference>
<dbReference type="GO" id="GO:0043525">
    <property type="term" value="P:positive regulation of neuron apoptotic process"/>
    <property type="evidence" value="ECO:0000315"/>
    <property type="project" value="MGI"/>
</dbReference>
<dbReference type="GO" id="GO:0045666">
    <property type="term" value="P:positive regulation of neuron differentiation"/>
    <property type="evidence" value="ECO:0000250"/>
    <property type="project" value="UniProtKB"/>
</dbReference>
<dbReference type="GO" id="GO:0045747">
    <property type="term" value="P:positive regulation of Notch signaling pathway"/>
    <property type="evidence" value="ECO:0000315"/>
    <property type="project" value="MGI"/>
</dbReference>
<dbReference type="GO" id="GO:0045944">
    <property type="term" value="P:positive regulation of transcription by RNA polymerase II"/>
    <property type="evidence" value="ECO:0000314"/>
    <property type="project" value="MGI"/>
</dbReference>
<dbReference type="GO" id="GO:0042127">
    <property type="term" value="P:regulation of cell population proliferation"/>
    <property type="evidence" value="ECO:0000314"/>
    <property type="project" value="MGI"/>
</dbReference>
<dbReference type="GO" id="GO:0030856">
    <property type="term" value="P:regulation of epithelial cell differentiation"/>
    <property type="evidence" value="ECO:0000315"/>
    <property type="project" value="MGI"/>
</dbReference>
<dbReference type="GO" id="GO:0010468">
    <property type="term" value="P:regulation of gene expression"/>
    <property type="evidence" value="ECO:0000315"/>
    <property type="project" value="UniProtKB"/>
</dbReference>
<dbReference type="GO" id="GO:0007346">
    <property type="term" value="P:regulation of mitotic cell cycle"/>
    <property type="evidence" value="ECO:0000315"/>
    <property type="project" value="MGI"/>
</dbReference>
<dbReference type="GO" id="GO:0050767">
    <property type="term" value="P:regulation of neurogenesis"/>
    <property type="evidence" value="ECO:0000315"/>
    <property type="project" value="MGI"/>
</dbReference>
<dbReference type="GO" id="GO:0008593">
    <property type="term" value="P:regulation of Notch signaling pathway"/>
    <property type="evidence" value="ECO:0000315"/>
    <property type="project" value="MGI"/>
</dbReference>
<dbReference type="GO" id="GO:0060165">
    <property type="term" value="P:regulation of timing of subpallium neuron differentiation"/>
    <property type="evidence" value="ECO:0000315"/>
    <property type="project" value="MGI"/>
</dbReference>
<dbReference type="GO" id="GO:0006357">
    <property type="term" value="P:regulation of transcription by RNA polymerase II"/>
    <property type="evidence" value="ECO:0000314"/>
    <property type="project" value="UniProtKB"/>
</dbReference>
<dbReference type="GO" id="GO:0070849">
    <property type="term" value="P:response to epidermal growth factor"/>
    <property type="evidence" value="ECO:0007669"/>
    <property type="project" value="Ensembl"/>
</dbReference>
<dbReference type="GO" id="GO:0051593">
    <property type="term" value="P:response to folic acid"/>
    <property type="evidence" value="ECO:0007669"/>
    <property type="project" value="Ensembl"/>
</dbReference>
<dbReference type="GO" id="GO:0032526">
    <property type="term" value="P:response to retinoic acid"/>
    <property type="evidence" value="ECO:0007669"/>
    <property type="project" value="Ensembl"/>
</dbReference>
<dbReference type="GO" id="GO:0021527">
    <property type="term" value="P:spinal cord association neuron differentiation"/>
    <property type="evidence" value="ECO:0000315"/>
    <property type="project" value="MGI"/>
</dbReference>
<dbReference type="GO" id="GO:0021529">
    <property type="term" value="P:spinal cord oligodendrocyte cell differentiation"/>
    <property type="evidence" value="ECO:0000316"/>
    <property type="project" value="MGI"/>
</dbReference>
<dbReference type="GO" id="GO:0021530">
    <property type="term" value="P:spinal cord oligodendrocyte cell fate specification"/>
    <property type="evidence" value="ECO:0000315"/>
    <property type="project" value="MGI"/>
</dbReference>
<dbReference type="GO" id="GO:0061102">
    <property type="term" value="P:stomach neuroendocrine cell differentiation"/>
    <property type="evidence" value="ECO:0000315"/>
    <property type="project" value="MGI"/>
</dbReference>
<dbReference type="GO" id="GO:0060163">
    <property type="term" value="P:subpallium neuron fate commitment"/>
    <property type="evidence" value="ECO:0000315"/>
    <property type="project" value="MGI"/>
</dbReference>
<dbReference type="GO" id="GO:0061549">
    <property type="term" value="P:sympathetic ganglion development"/>
    <property type="evidence" value="ECO:0000315"/>
    <property type="project" value="UniProtKB"/>
</dbReference>
<dbReference type="GO" id="GO:0048485">
    <property type="term" value="P:sympathetic nervous system development"/>
    <property type="evidence" value="ECO:0000304"/>
    <property type="project" value="BHF-UCL"/>
</dbReference>
<dbReference type="GO" id="GO:0060579">
    <property type="term" value="P:ventral spinal cord interneuron fate commitment"/>
    <property type="evidence" value="ECO:0000315"/>
    <property type="project" value="UniProtKB"/>
</dbReference>
<dbReference type="GO" id="GO:0021750">
    <property type="term" value="P:vestibular nucleus development"/>
    <property type="evidence" value="ECO:0000315"/>
    <property type="project" value="MGI"/>
</dbReference>
<dbReference type="CDD" id="cd19742">
    <property type="entry name" value="bHLH_TS_ASCL1_Mash1"/>
    <property type="match status" value="1"/>
</dbReference>
<dbReference type="FunFam" id="4.10.280.10:FF:000029">
    <property type="entry name" value="Achaete-scute family bHLH transcription factor 1"/>
    <property type="match status" value="1"/>
</dbReference>
<dbReference type="Gene3D" id="4.10.280.10">
    <property type="entry name" value="Helix-loop-helix DNA-binding domain"/>
    <property type="match status" value="1"/>
</dbReference>
<dbReference type="InterPro" id="IPR011598">
    <property type="entry name" value="bHLH_dom"/>
</dbReference>
<dbReference type="InterPro" id="IPR036638">
    <property type="entry name" value="HLH_DNA-bd_sf"/>
</dbReference>
<dbReference type="InterPro" id="IPR015660">
    <property type="entry name" value="MASH1/Ascl1a-like"/>
</dbReference>
<dbReference type="PANTHER" id="PTHR13935:SF153">
    <property type="entry name" value="ACHAETE-SCUTE FAMILY BHLH TRANSCRIPTION FACTOR 1"/>
    <property type="match status" value="1"/>
</dbReference>
<dbReference type="PANTHER" id="PTHR13935">
    <property type="entry name" value="ACHAETE-SCUTE TRANSCRIPTION FACTOR-RELATED"/>
    <property type="match status" value="1"/>
</dbReference>
<dbReference type="Pfam" id="PF00010">
    <property type="entry name" value="HLH"/>
    <property type="match status" value="1"/>
</dbReference>
<dbReference type="SMART" id="SM00353">
    <property type="entry name" value="HLH"/>
    <property type="match status" value="1"/>
</dbReference>
<dbReference type="SUPFAM" id="SSF47459">
    <property type="entry name" value="HLH, helix-loop-helix DNA-binding domain"/>
    <property type="match status" value="1"/>
</dbReference>
<dbReference type="PROSITE" id="PS50888">
    <property type="entry name" value="BHLH"/>
    <property type="match status" value="1"/>
</dbReference>